<keyword id="KW-1185">Reference proteome</keyword>
<keyword id="KW-0964">Secreted</keyword>
<keyword id="KW-0770">Synapse</keyword>
<protein>
    <recommendedName>
        <fullName evidence="1">Synaptic plasticity regulator PANTS</fullName>
    </recommendedName>
    <alternativeName>
        <fullName evidence="1">Plasticity-associated neural transcript short</fullName>
    </alternativeName>
</protein>
<evidence type="ECO:0000250" key="1">
    <source>
        <dbReference type="UniProtKB" id="Q3U595"/>
    </source>
</evidence>
<evidence type="ECO:0000256" key="2">
    <source>
        <dbReference type="SAM" id="MobiDB-lite"/>
    </source>
</evidence>
<evidence type="ECO:0000305" key="3"/>
<accession>A2BD89</accession>
<dbReference type="EMBL" id="BC130096">
    <property type="protein sequence ID" value="AAI30097.1"/>
    <property type="molecule type" value="mRNA"/>
</dbReference>
<dbReference type="RefSeq" id="NP_001091265.1">
    <property type="nucleotide sequence ID" value="NM_001097796.1"/>
</dbReference>
<dbReference type="SMR" id="A2BD89"/>
<dbReference type="DNASU" id="100037072"/>
<dbReference type="GeneID" id="100037072"/>
<dbReference type="KEGG" id="xla:100037072"/>
<dbReference type="AGR" id="Xenbase:XB-GENE-6255523"/>
<dbReference type="CTD" id="100037072"/>
<dbReference type="Xenbase" id="XB-GENE-6255523">
    <property type="gene designation" value="c1h22orf39.L"/>
</dbReference>
<dbReference type="OrthoDB" id="5946508at2759"/>
<dbReference type="Proteomes" id="UP000186698">
    <property type="component" value="Chromosome 1L"/>
</dbReference>
<dbReference type="Bgee" id="100037072">
    <property type="expression patterns" value="Expressed in pancreas and 19 other cell types or tissues"/>
</dbReference>
<dbReference type="GO" id="GO:0045202">
    <property type="term" value="C:synapse"/>
    <property type="evidence" value="ECO:0000250"/>
    <property type="project" value="UniProtKB"/>
</dbReference>
<dbReference type="GO" id="GO:0043083">
    <property type="term" value="C:synaptic cleft"/>
    <property type="evidence" value="ECO:0000250"/>
    <property type="project" value="UniProtKB"/>
</dbReference>
<dbReference type="GO" id="GO:1900272">
    <property type="term" value="P:negative regulation of long-term synaptic potentiation"/>
    <property type="evidence" value="ECO:0000250"/>
    <property type="project" value="UniProtKB"/>
</dbReference>
<dbReference type="GO" id="GO:0048167">
    <property type="term" value="P:regulation of synaptic plasticity"/>
    <property type="evidence" value="ECO:0000250"/>
    <property type="project" value="UniProtKB"/>
</dbReference>
<dbReference type="InterPro" id="IPR021475">
    <property type="entry name" value="Pants/Emi1-like"/>
</dbReference>
<dbReference type="PANTHER" id="PTHR28052">
    <property type="entry name" value="UPF0545 PROTEIN C22ORF39"/>
    <property type="match status" value="1"/>
</dbReference>
<dbReference type="PANTHER" id="PTHR28052:SF1">
    <property type="entry name" value="UPF0545 PROTEIN C22ORF39"/>
    <property type="match status" value="1"/>
</dbReference>
<dbReference type="Pfam" id="PF11326">
    <property type="entry name" value="PANTS-like"/>
    <property type="match status" value="1"/>
</dbReference>
<comment type="function">
    <text evidence="1">Negatively regulates long-term potentiation and modulates adult synaptic plasticity.</text>
</comment>
<comment type="subcellular location">
    <subcellularLocation>
        <location evidence="1">Synapse</location>
    </subcellularLocation>
    <subcellularLocation>
        <location evidence="1">Synaptic cleft</location>
    </subcellularLocation>
    <text evidence="1">Detected in both the presynaptic and postsynaptic regions of the synapse and is secreted from neurons into the synaptic cleft. May be released by neuronal dense core vesicles which mediate the release of cleaved neuropeptides.</text>
</comment>
<comment type="PTM">
    <text evidence="1">Rapidly degraded by proteolysis following neuronal stimulation, resulting in increased AMPA receptor clustering.</text>
</comment>
<comment type="similarity">
    <text evidence="3">Belongs to the UPF0545 family.</text>
</comment>
<feature type="chain" id="PRO_0000326134" description="Synaptic plasticity regulator PANTS">
    <location>
        <begin position="1"/>
        <end position="106"/>
    </location>
</feature>
<feature type="region of interest" description="Disordered" evidence="2">
    <location>
        <begin position="67"/>
        <end position="106"/>
    </location>
</feature>
<sequence>MADSGCWRPPRDCDDYWSEWKHCKSLRNRFHNYYTYGKAPECQEWKRDYMTCRDWEKTKSNNLKEALQQSEKTRLEGKQNNSPVWTLRKNPPPDWYLPLDPGKPRQ</sequence>
<proteinExistence type="inferred from homology"/>
<organism>
    <name type="scientific">Xenopus laevis</name>
    <name type="common">African clawed frog</name>
    <dbReference type="NCBI Taxonomy" id="8355"/>
    <lineage>
        <taxon>Eukaryota</taxon>
        <taxon>Metazoa</taxon>
        <taxon>Chordata</taxon>
        <taxon>Craniata</taxon>
        <taxon>Vertebrata</taxon>
        <taxon>Euteleostomi</taxon>
        <taxon>Amphibia</taxon>
        <taxon>Batrachia</taxon>
        <taxon>Anura</taxon>
        <taxon>Pipoidea</taxon>
        <taxon>Pipidae</taxon>
        <taxon>Xenopodinae</taxon>
        <taxon>Xenopus</taxon>
        <taxon>Xenopus</taxon>
    </lineage>
</organism>
<reference key="1">
    <citation type="submission" date="2006-12" db="EMBL/GenBank/DDBJ databases">
        <authorList>
            <consortium name="NIH - Xenopus Gene Collection (XGC) project"/>
        </authorList>
    </citation>
    <scope>NUCLEOTIDE SEQUENCE [LARGE SCALE MRNA]</scope>
    <source>
        <tissue>Embryo</tissue>
    </source>
</reference>
<name>CV039_XENLA</name>